<accession>Q2FKF9</accession>
<comment type="subcellular location">
    <subcellularLocation>
        <location evidence="1">Cell membrane</location>
        <topology evidence="1">Lipid-anchor</topology>
    </subcellularLocation>
</comment>
<comment type="similarity">
    <text evidence="2">Belongs to the staphylococcal tandem lipoprotein family.</text>
</comment>
<comment type="sequence caution" evidence="2">
    <conflict type="erroneous initiation">
        <sequence resource="EMBL-CDS" id="ABD21057"/>
    </conflict>
</comment>
<feature type="signal peptide" evidence="1">
    <location>
        <begin position="1"/>
        <end position="23"/>
    </location>
</feature>
<feature type="chain" id="PRO_0000282070" description="Uncharacterized lipoprotein SAUSA300_0102">
    <location>
        <begin position="24"/>
        <end position="255"/>
    </location>
</feature>
<feature type="lipid moiety-binding region" description="N-palmitoyl cysteine" evidence="1">
    <location>
        <position position="24"/>
    </location>
</feature>
<feature type="lipid moiety-binding region" description="S-diacylglycerol cysteine" evidence="1">
    <location>
        <position position="24"/>
    </location>
</feature>
<organism>
    <name type="scientific">Staphylococcus aureus (strain USA300)</name>
    <dbReference type="NCBI Taxonomy" id="367830"/>
    <lineage>
        <taxon>Bacteria</taxon>
        <taxon>Bacillati</taxon>
        <taxon>Bacillota</taxon>
        <taxon>Bacilli</taxon>
        <taxon>Bacillales</taxon>
        <taxon>Staphylococcaceae</taxon>
        <taxon>Staphylococcus</taxon>
    </lineage>
</organism>
<keyword id="KW-1003">Cell membrane</keyword>
<keyword id="KW-0449">Lipoprotein</keyword>
<keyword id="KW-0472">Membrane</keyword>
<keyword id="KW-0564">Palmitate</keyword>
<keyword id="KW-0732">Signal</keyword>
<gene>
    <name type="ordered locus">SAUSA300_0102</name>
</gene>
<dbReference type="EMBL" id="CP000255">
    <property type="protein sequence ID" value="ABD21057.1"/>
    <property type="status" value="ALT_INIT"/>
    <property type="molecule type" value="Genomic_DNA"/>
</dbReference>
<dbReference type="SMR" id="Q2FKF9"/>
<dbReference type="KEGG" id="saa:SAUSA300_0102"/>
<dbReference type="HOGENOM" id="CLU_071589_0_1_9"/>
<dbReference type="OMA" id="RYPVKMI"/>
<dbReference type="Proteomes" id="UP000001939">
    <property type="component" value="Chromosome"/>
</dbReference>
<dbReference type="GO" id="GO:0005886">
    <property type="term" value="C:plasma membrane"/>
    <property type="evidence" value="ECO:0007669"/>
    <property type="project" value="UniProtKB-SubCell"/>
</dbReference>
<dbReference type="Gene3D" id="2.50.20.40">
    <property type="match status" value="1"/>
</dbReference>
<dbReference type="InterPro" id="IPR007595">
    <property type="entry name" value="Csa"/>
</dbReference>
<dbReference type="InterPro" id="IPR038641">
    <property type="entry name" value="Csa_sf"/>
</dbReference>
<dbReference type="NCBIfam" id="TIGR01742">
    <property type="entry name" value="SA_tandem_lipo"/>
    <property type="match status" value="1"/>
</dbReference>
<dbReference type="Pfam" id="PF04507">
    <property type="entry name" value="DUF576"/>
    <property type="match status" value="1"/>
</dbReference>
<dbReference type="PROSITE" id="PS51257">
    <property type="entry name" value="PROKAR_LIPOPROTEIN"/>
    <property type="match status" value="1"/>
</dbReference>
<sequence length="255" mass="29577">MKRLNKLVLGIIFLFLVISITAGCGIGKEAKIKKSFEKTLSMYPIKNLEDLYDKEGYRDDEFDKNDKGTWIIGSEMATQNKGEALKVKGMVLYMNRNTKTTKGYYYVNAIKNDKDGRPQENEKRYPVKMVDNKIIPTKEIKDKNIKKEIENFKFFVQYGNFKDLSKYKDGDISYNPEVPSYSAKYQLTNDDYNVKQLRKRYDIPTNKAPKLLLKGTGNLKGSSVGYKDIEFTFVEKKEENIYFSDGLIFKPSEDK</sequence>
<evidence type="ECO:0000255" key="1">
    <source>
        <dbReference type="PROSITE-ProRule" id="PRU00303"/>
    </source>
</evidence>
<evidence type="ECO:0000305" key="2"/>
<reference key="1">
    <citation type="journal article" date="2006" name="Lancet">
        <title>Complete genome sequence of USA300, an epidemic clone of community-acquired meticillin-resistant Staphylococcus aureus.</title>
        <authorList>
            <person name="Diep B.A."/>
            <person name="Gill S.R."/>
            <person name="Chang R.F."/>
            <person name="Phan T.H."/>
            <person name="Chen J.H."/>
            <person name="Davidson M.G."/>
            <person name="Lin F."/>
            <person name="Lin J."/>
            <person name="Carleton H.A."/>
            <person name="Mongodin E.F."/>
            <person name="Sensabaugh G.F."/>
            <person name="Perdreau-Remington F."/>
        </authorList>
    </citation>
    <scope>NUCLEOTIDE SEQUENCE [LARGE SCALE GENOMIC DNA]</scope>
    <source>
        <strain>USA300</strain>
    </source>
</reference>
<name>Y102_STAA3</name>
<proteinExistence type="inferred from homology"/>
<protein>
    <recommendedName>
        <fullName>Uncharacterized lipoprotein SAUSA300_0102</fullName>
    </recommendedName>
</protein>